<dbReference type="EMBL" id="CR861171">
    <property type="protein sequence ID" value="CAH93243.1"/>
    <property type="molecule type" value="mRNA"/>
</dbReference>
<dbReference type="RefSeq" id="NP_001128899.1">
    <property type="nucleotide sequence ID" value="NM_001135427.2"/>
</dbReference>
<dbReference type="SMR" id="Q5R4S3"/>
<dbReference type="STRING" id="9601.ENSPPYP00000005511"/>
<dbReference type="GeneID" id="100171846"/>
<dbReference type="CTD" id="28977"/>
<dbReference type="eggNOG" id="KOG4106">
    <property type="taxonomic scope" value="Eukaryota"/>
</dbReference>
<dbReference type="InParanoid" id="Q5R4S3"/>
<dbReference type="Proteomes" id="UP000001595">
    <property type="component" value="Unplaced"/>
</dbReference>
<dbReference type="GO" id="GO:0005762">
    <property type="term" value="C:mitochondrial large ribosomal subunit"/>
    <property type="evidence" value="ECO:0000250"/>
    <property type="project" value="UniProtKB"/>
</dbReference>
<dbReference type="InterPro" id="IPR019346">
    <property type="entry name" value="Ribosomal_mL42"/>
</dbReference>
<dbReference type="PANTHER" id="PTHR13450:SF4">
    <property type="entry name" value="LARGE RIBOSOMAL SUBUNIT PROTEIN ML42"/>
    <property type="match status" value="1"/>
</dbReference>
<dbReference type="PANTHER" id="PTHR13450">
    <property type="entry name" value="MITOCHONDRIAL 39S RIBOSOMAL PROTEIN L42"/>
    <property type="match status" value="1"/>
</dbReference>
<dbReference type="Pfam" id="PF10210">
    <property type="entry name" value="MRP-S32"/>
    <property type="match status" value="1"/>
</dbReference>
<name>RM42_PONAB</name>
<reference key="1">
    <citation type="submission" date="2004-11" db="EMBL/GenBank/DDBJ databases">
        <authorList>
            <consortium name="The German cDNA consortium"/>
        </authorList>
    </citation>
    <scope>NUCLEOTIDE SEQUENCE [LARGE SCALE MRNA]</scope>
    <source>
        <tissue>Brain cortex</tissue>
    </source>
</reference>
<sequence length="139" mass="16178">MAVAAVKWVMSKRTILKHLFPVQNGALYCVCHKSTYSPLPDDYNCSVELALTSDGRTIVCYHPSVDIPYEHTKPIPRPDPVHNNEETHDQVLKTRLEEKVEHLEEGPMIEQLSKMFFTTKHRWYPHGRCRKNLNPPKDR</sequence>
<organism>
    <name type="scientific">Pongo abelii</name>
    <name type="common">Sumatran orangutan</name>
    <name type="synonym">Pongo pygmaeus abelii</name>
    <dbReference type="NCBI Taxonomy" id="9601"/>
    <lineage>
        <taxon>Eukaryota</taxon>
        <taxon>Metazoa</taxon>
        <taxon>Chordata</taxon>
        <taxon>Craniata</taxon>
        <taxon>Vertebrata</taxon>
        <taxon>Euteleostomi</taxon>
        <taxon>Mammalia</taxon>
        <taxon>Eutheria</taxon>
        <taxon>Euarchontoglires</taxon>
        <taxon>Primates</taxon>
        <taxon>Haplorrhini</taxon>
        <taxon>Catarrhini</taxon>
        <taxon>Hominidae</taxon>
        <taxon>Pongo</taxon>
    </lineage>
</organism>
<protein>
    <recommendedName>
        <fullName evidence="3">Large ribosomal subunit protein mL42</fullName>
    </recommendedName>
    <alternativeName>
        <fullName>28S ribosomal protein S32, mitochondrial</fullName>
        <shortName>MRP-S32</shortName>
        <shortName>S32mt</shortName>
    </alternativeName>
    <alternativeName>
        <fullName>39S ribosomal protein L42, mitochondrial</fullName>
        <shortName>L42mt</shortName>
        <shortName>MRP-L42</shortName>
    </alternativeName>
</protein>
<accession>Q5R4S3</accession>
<feature type="transit peptide" description="Mitochondrion" evidence="1">
    <location>
        <begin position="1"/>
        <end position="32"/>
    </location>
</feature>
<feature type="chain" id="PRO_0000273237" description="Large ribosomal subunit protein mL42">
    <location>
        <begin position="33"/>
        <end position="139"/>
    </location>
</feature>
<evidence type="ECO:0000250" key="1"/>
<evidence type="ECO:0000250" key="2">
    <source>
        <dbReference type="UniProtKB" id="Q9Y6G3"/>
    </source>
</evidence>
<evidence type="ECO:0000305" key="3"/>
<keyword id="KW-0496">Mitochondrion</keyword>
<keyword id="KW-1185">Reference proteome</keyword>
<keyword id="KW-0687">Ribonucleoprotein</keyword>
<keyword id="KW-0689">Ribosomal protein</keyword>
<keyword id="KW-0809">Transit peptide</keyword>
<proteinExistence type="evidence at transcript level"/>
<gene>
    <name type="primary">MRPL42</name>
    <name type="synonym">MRPS32</name>
</gene>
<comment type="subunit">
    <text evidence="2">Component of the mitochondrial ribosome large subunit (39S) which comprises a 16S rRNA and about 50 distinct proteins. Component of the mitochondrial ribosome small subunit (28S) which comprises a 12S rRNA and about 30 distinct proteins.</text>
</comment>
<comment type="subcellular location">
    <subcellularLocation>
        <location evidence="2">Mitochondrion</location>
    </subcellularLocation>
</comment>
<comment type="similarity">
    <text evidence="3">Belongs to the mitochondrion-specific ribosomal protein mL42 family.</text>
</comment>
<comment type="caution">
    <text evidence="3">Has been found in the mitochondrial ribosome large and small subunits.</text>
</comment>